<name>DAPB2_PSEMX</name>
<reference key="1">
    <citation type="journal article" date="2014" name="Sci. Rep.">
        <title>Identification of the catalytic triad of family S46 exopeptidases, closely related to clan PA endopeptidases.</title>
        <authorList>
            <person name="Suzuki Y."/>
            <person name="Sakamoto Y."/>
            <person name="Tanaka N."/>
            <person name="Okada H."/>
            <person name="Morikawa Y."/>
            <person name="Ogasawara W."/>
        </authorList>
    </citation>
    <scope>NUCLEOTIDE SEQUENCE [GENOMIC DNA]</scope>
    <scope>PROTEIN SEQUENCE OF 25-44; 321-333; 467-489 AND 610-620</scope>
    <scope>FUNCTION</scope>
    <scope>CATALYTIC ACTIVITY</scope>
    <scope>BIOPHYSICOCHEMICAL PROPERTIES</scope>
    <scope>CIRCULAR DICHROISM ANALYSIS</scope>
    <scope>PHYLOGENETIC STUDY</scope>
    <scope>SIGNAL</scope>
    <scope>ACTIVE SITES</scope>
    <scope>MUTAGENESIS OF HIS-86; ASP-195; ASP-214; ASP-224; ASP-522; ASP-574 AND SER-657</scope>
    <source>
        <strain evidence="12">WO24</strain>
    </source>
</reference>
<reference key="2">
    <citation type="journal article" date="1996" name="J. Bacteriol.">
        <title>Two types of novel dipeptidyl aminopeptidases from Pseudomonas sp. strain WO24.</title>
        <authorList>
            <person name="Ogasawara W."/>
            <person name="Kobayashi G."/>
            <person name="Okada H."/>
            <person name="Morikawa Y."/>
        </authorList>
    </citation>
    <scope>FUNCTION</scope>
    <scope>CATALYTIC ACTIVITY</scope>
    <scope>ACTIVITY REGULATION</scope>
    <scope>BIOPHYSICOCHEMICAL PROPERTIES</scope>
    <scope>SUBSTRATE SPECIFICITY</scope>
    <scope>SUBUNIT</scope>
    <scope>BIOTECHNOLOGY</scope>
    <source>
        <strain>WO24</strain>
    </source>
</reference>
<reference key="3">
    <citation type="journal article" date="2014" name="Acta Crystallogr. F">
        <title>Crystallization and preliminary X-ray crystallographic studies of dipeptidyl aminopeptidase BII from Pseudoxanthomonas mexicana WO24.</title>
        <authorList>
            <person name="Sakamoto Y."/>
            <person name="Suzuki Y."/>
            <person name="Iizuka I."/>
            <person name="Tateoka C."/>
            <person name="Roppongi S."/>
            <person name="Okada H."/>
            <person name="Nonaka T."/>
            <person name="Morikawa Y."/>
            <person name="Nakamura K.T."/>
            <person name="Ogasawara W."/>
            <person name="Tanaka N."/>
        </authorList>
    </citation>
    <scope>CRYSTALLIZATION</scope>
    <scope>CATALYTIC ACTIVITY</scope>
    <scope>BIOPHYSICOCHEMICAL PROPERTIES</scope>
    <source>
        <strain>WO24</strain>
    </source>
</reference>
<reference evidence="13 14 15 16 17 18 19 20 21 22" key="4">
    <citation type="journal article" date="2014" name="Sci. Rep.">
        <title>S46 peptidases are the first exopeptidases to be members of clan PA.</title>
        <authorList>
            <person name="Sakamoto Y."/>
            <person name="Suzuki Y."/>
            <person name="Iizuka I."/>
            <person name="Tateoka C."/>
            <person name="Roppongi S."/>
            <person name="Fujimoto M."/>
            <person name="Inaka K."/>
            <person name="Tanaka H."/>
            <person name="Masaki M."/>
            <person name="Ohta K."/>
            <person name="Okada H."/>
            <person name="Nonaka T."/>
            <person name="Morikawa Y."/>
            <person name="Nakamura K.T."/>
            <person name="Ogasawara W."/>
            <person name="Tanaka N."/>
        </authorList>
    </citation>
    <scope>X-RAY CRYSTALLOGRAPHY (1.74 ANGSTROMS) OF WILD-TYPE AND MUTANTS ALA-86 AND ALA-86/ALA-224/ALA-657 OF 25-722 OF PEPTIDE-FREE FORMS AND IN COMPLEXES WITH PEPTIDE SUBSTRATES AND ZINC</scope>
    <scope>FUNCTION</scope>
    <scope>CATALYTIC ACTIVITY</scope>
    <scope>SUBSTRATE SPECIFICITY</scope>
    <scope>REACTION MECHANISM</scope>
    <scope>SUBUNIT</scope>
    <scope>DOMAIN</scope>
    <scope>BIOTECHNOLOGY</scope>
    <scope>PHYLOGENETIC STUDY</scope>
    <scope>ACTIVE SITES</scope>
    <scope>MUTAGENESIS OF HIS-86; ASN-215; TRP-216; ASP-224; ASN-330; SER-657 AND ASP-674</scope>
    <source>
        <strain evidence="8">WO24</strain>
    </source>
</reference>
<reference key="5">
    <citation type="journal article" date="2015" name="Sci. Rep.">
        <title>Structural and mutational analyses of dipeptidyl peptidase 11 from Porphyromonas gingivalis reveal the molecular basis for strict substrate specificity.</title>
        <authorList>
            <person name="Sakamoto Y."/>
            <person name="Suzuki Y."/>
            <person name="Iizuka I."/>
            <person name="Tateoka C."/>
            <person name="Roppongi S."/>
            <person name="Fujimoto M."/>
            <person name="Inaka K."/>
            <person name="Tanaka H."/>
            <person name="Yamada M."/>
            <person name="Ohta K."/>
            <person name="Gouda H."/>
            <person name="Nonaka T."/>
            <person name="Ogasawara W."/>
            <person name="Tanaka N."/>
        </authorList>
    </citation>
    <scope>X-RAY CRYSTALLOGRAPHY (2.18 ANGSTROMS) OF MUTANT ARG-675 IN COMPLEX WITH LEU-GLU DIPEPTIDE</scope>
    <scope>MUTAGENESIS OF GLY-675</scope>
</reference>
<protein>
    <recommendedName>
        <fullName evidence="12">Dipeptidyl aminopeptidase BII</fullName>
        <shortName evidence="7 9">DAP BII</shortName>
        <ecNumber evidence="2 3 4 6">3.4.14.-</ecNumber>
    </recommendedName>
</protein>
<keyword id="KW-0002">3D-structure</keyword>
<keyword id="KW-0031">Aminopeptidase</keyword>
<keyword id="KW-0903">Direct protein sequencing</keyword>
<keyword id="KW-1015">Disulfide bond</keyword>
<keyword id="KW-0378">Hydrolase</keyword>
<keyword id="KW-0645">Protease</keyword>
<keyword id="KW-0732">Signal</keyword>
<evidence type="ECO:0000255" key="1"/>
<evidence type="ECO:0000269" key="2">
    <source>
    </source>
</evidence>
<evidence type="ECO:0000269" key="3">
    <source>
    </source>
</evidence>
<evidence type="ECO:0000269" key="4">
    <source>
    </source>
</evidence>
<evidence type="ECO:0000269" key="5">
    <source>
    </source>
</evidence>
<evidence type="ECO:0000269" key="6">
    <source>
    </source>
</evidence>
<evidence type="ECO:0000303" key="7">
    <source>
    </source>
</evidence>
<evidence type="ECO:0000303" key="8">
    <source>
    </source>
</evidence>
<evidence type="ECO:0000303" key="9">
    <source>
    </source>
</evidence>
<evidence type="ECO:0000305" key="10">
    <source>
    </source>
</evidence>
<evidence type="ECO:0000305" key="11">
    <source>
    </source>
</evidence>
<evidence type="ECO:0000312" key="12">
    <source>
        <dbReference type="EMBL" id="BAO18427.1"/>
    </source>
</evidence>
<evidence type="ECO:0007744" key="13">
    <source>
        <dbReference type="PDB" id="3WOI"/>
    </source>
</evidence>
<evidence type="ECO:0007744" key="14">
    <source>
        <dbReference type="PDB" id="3WOJ"/>
    </source>
</evidence>
<evidence type="ECO:0007744" key="15">
    <source>
        <dbReference type="PDB" id="3WOK"/>
    </source>
</evidence>
<evidence type="ECO:0007744" key="16">
    <source>
        <dbReference type="PDB" id="3WOL"/>
    </source>
</evidence>
<evidence type="ECO:0007744" key="17">
    <source>
        <dbReference type="PDB" id="3WOM"/>
    </source>
</evidence>
<evidence type="ECO:0007744" key="18">
    <source>
        <dbReference type="PDB" id="3WON"/>
    </source>
</evidence>
<evidence type="ECO:0007744" key="19">
    <source>
        <dbReference type="PDB" id="3WOO"/>
    </source>
</evidence>
<evidence type="ECO:0007744" key="20">
    <source>
        <dbReference type="PDB" id="3WOP"/>
    </source>
</evidence>
<evidence type="ECO:0007744" key="21">
    <source>
        <dbReference type="PDB" id="3WOQ"/>
    </source>
</evidence>
<evidence type="ECO:0007744" key="22">
    <source>
        <dbReference type="PDB" id="3WOR"/>
    </source>
</evidence>
<evidence type="ECO:0007829" key="23">
    <source>
        <dbReference type="PDB" id="3WOL"/>
    </source>
</evidence>
<evidence type="ECO:0007829" key="24">
    <source>
        <dbReference type="PDB" id="3WOM"/>
    </source>
</evidence>
<gene>
    <name evidence="12" type="primary">dapb2</name>
</gene>
<accession>V5YM14</accession>
<sequence length="722" mass="78698">MRPNLLAAAIAVPLSLLAAQIAQAGEGMWVPQQLPEIAGPLKKAGLKLSPQQISDLTGDPMGAVVALGGCTASFVSPNGLVVTNHHCAYGAIQLNSTAENNLIKNGFNAPTTADEVSAGPNARVFVLDEITDVTKDAKAAIAAAGDDALARTKALEAFEKKLIADCEAEAGFRCRLYSFSGGNTYRLFKNLEIKDVRLAYAPPGSVGKFGGDIDNWMWPRHTGDFAFYRAYVGKDGKPAAFSKDNVPYQPKHWLKFADQPLGAGDFVMVAGYPGSTNRYALAAEFDNTAQWTYPTIARHYKNQIAMVEAAGKQNADIQVKYAATMAGWNNTSKNYDGQLEGFKRIDAAGQKLREEAAVLGWLKGQGAKGQPALDAHAKLLDLLEQSKATRDRDLTLALFNNTAMLGSATQLYRLSIEREKPNAERESGYQERDLPAIEGGLKQLERRYVAAMDRQLQEYWLNEYIKLPADQRVAAVDAWLGGNDAAAVKRALDRLAGTKLGSTEERLKWFAADRKAFEASNDPAIQYAVAVMPTLLKLEQERKTRAGENLAARPVYLQALADYKKSQGEFVYPDANLSLRITFGNVMGYAPKDGMEYTPFTTLEGVVAKETGQDPFDSPKALLDAVAAKRYGGLEDKRIGSVPVNYLSDLDITGGNSGSPVLDAHGKLVGLAFDGNWESVSSNWVFDPKMTRMIAVDGRYLRWIMQEVYPAPQLLKEMNVGK</sequence>
<feature type="signal peptide" evidence="2">
    <location>
        <begin position="1"/>
        <end position="24"/>
    </location>
</feature>
<feature type="chain" id="PRO_0000433463" description="Dipeptidyl aminopeptidase BII" evidence="1">
    <location>
        <begin position="25"/>
        <end position="722"/>
    </location>
</feature>
<feature type="active site" description="Charge relay system" evidence="10 11">
    <location>
        <position position="86"/>
    </location>
</feature>
<feature type="active site" description="Charge relay system" evidence="10 11">
    <location>
        <position position="224"/>
    </location>
</feature>
<feature type="active site" description="Charge relay system" evidence="10 11">
    <location>
        <position position="657"/>
    </location>
</feature>
<feature type="binding site" evidence="4">
    <location>
        <begin position="215"/>
        <end position="216"/>
    </location>
    <ligand>
        <name>substrate</name>
    </ligand>
</feature>
<feature type="binding site" evidence="4">
    <location>
        <position position="330"/>
    </location>
    <ligand>
        <name>substrate</name>
    </ligand>
</feature>
<feature type="binding site" evidence="4">
    <location>
        <begin position="655"/>
        <end position="657"/>
    </location>
    <ligand>
        <name>substrate</name>
    </ligand>
</feature>
<feature type="binding site" evidence="4">
    <location>
        <begin position="673"/>
        <end position="674"/>
    </location>
    <ligand>
        <name>substrate</name>
    </ligand>
</feature>
<feature type="disulfide bond" evidence="4 16">
    <location>
        <begin position="70"/>
        <end position="87"/>
    </location>
</feature>
<feature type="disulfide bond" evidence="4 16">
    <location>
        <begin position="166"/>
        <end position="174"/>
    </location>
</feature>
<feature type="mutagenesis site" description="Loss of enzymatic activity. Loss of enzymatic activity; when associated with A-224 and A-657." evidence="2 4">
    <original>H</original>
    <variation>A</variation>
    <location>
        <position position="86"/>
    </location>
</feature>
<feature type="mutagenesis site" description="Decreased enzymatic activity to 23 percent relative to wild-type." evidence="2">
    <original>D</original>
    <variation>A</variation>
    <location>
        <position position="195"/>
    </location>
</feature>
<feature type="mutagenesis site" description="Decreased enzymatic activity to 1.5 percent relative to wild-type." evidence="2">
    <original>D</original>
    <variation>A</variation>
    <location>
        <position position="214"/>
    </location>
</feature>
<feature type="mutagenesis site" description="Decreased enzymatic activity to 3.0 percent relative to wild-type." evidence="2">
    <original>D</original>
    <variation>N</variation>
    <location>
        <position position="214"/>
    </location>
</feature>
<feature type="mutagenesis site" description="Loss of enzymatic activity." evidence="4">
    <original>N</original>
    <variation>A</variation>
    <location>
        <position position="215"/>
    </location>
</feature>
<feature type="mutagenesis site" description="Loss of enzymatic activity." evidence="4">
    <original>W</original>
    <variation>A</variation>
    <location>
        <position position="216"/>
    </location>
</feature>
<feature type="mutagenesis site" description="Decreased enzymatic activity to 0.026 percent relative to wild-type. Loss of enzymatic activity; when associated with A-86 and A-657." evidence="2 4">
    <original>D</original>
    <variation>A</variation>
    <location>
        <position position="224"/>
    </location>
</feature>
<feature type="mutagenesis site" description="Decreased enzymatic activity to 0.15 percent relative to wild-type." evidence="2">
    <original>D</original>
    <variation>N</variation>
    <location>
        <position position="224"/>
    </location>
</feature>
<feature type="mutagenesis site" description="Loss of enzymatic activity." evidence="4">
    <original>N</original>
    <variation>A</variation>
    <location>
        <position position="330"/>
    </location>
</feature>
<feature type="mutagenesis site" description="Decreased enzymatic activity to 32 percent relative to wild-type." evidence="2">
    <original>D</original>
    <variation>A</variation>
    <location>
        <position position="522"/>
    </location>
</feature>
<feature type="mutagenesis site" description="Decreased enzymatic activity to 16 percent relative to wild-type." evidence="2">
    <original>D</original>
    <variation>N</variation>
    <location>
        <position position="522"/>
    </location>
</feature>
<feature type="mutagenesis site" description="Decreased enzymatic activity to 83 percent relative to wild-type." evidence="2">
    <original>D</original>
    <variation>A</variation>
    <location>
        <position position="574"/>
    </location>
</feature>
<feature type="mutagenesis site" description="Decreased enzymatic activity to 21 percent relative to wild-type." evidence="2">
    <original>D</original>
    <variation>N</variation>
    <location>
        <position position="574"/>
    </location>
</feature>
<feature type="mutagenesis site" description="Loss of enzymatic activity. Loss of enzymatic activity; when associated with A-86 and A-224." evidence="2 4">
    <original>S</original>
    <variation>A</variation>
    <location>
        <position position="657"/>
    </location>
</feature>
<feature type="mutagenesis site" description="Loss of enzymatic activity." evidence="4">
    <original>D</original>
    <variation>A</variation>
    <location>
        <position position="674"/>
    </location>
</feature>
<feature type="mutagenesis site" description="Acquires the enzymatic activity for synthetic substrates with Asp/Glu at P1 position." evidence="5">
    <original>G</original>
    <variation>R</variation>
    <location>
        <position position="675"/>
    </location>
</feature>
<feature type="helix" evidence="23">
    <location>
        <begin position="31"/>
        <end position="33"/>
    </location>
</feature>
<feature type="helix" evidence="23">
    <location>
        <begin position="34"/>
        <end position="44"/>
    </location>
</feature>
<feature type="helix" evidence="23">
    <location>
        <begin position="50"/>
        <end position="54"/>
    </location>
</feature>
<feature type="helix" evidence="23">
    <location>
        <begin position="61"/>
        <end position="63"/>
    </location>
</feature>
<feature type="strand" evidence="23">
    <location>
        <begin position="64"/>
        <end position="66"/>
    </location>
</feature>
<feature type="strand" evidence="23">
    <location>
        <begin position="68"/>
        <end position="74"/>
    </location>
</feature>
<feature type="strand" evidence="23">
    <location>
        <begin position="80"/>
        <end position="83"/>
    </location>
</feature>
<feature type="helix" evidence="23">
    <location>
        <begin position="85"/>
        <end position="94"/>
    </location>
</feature>
<feature type="strand" evidence="23">
    <location>
        <begin position="98"/>
        <end position="100"/>
    </location>
</feature>
<feature type="helix" evidence="23">
    <location>
        <begin position="102"/>
        <end position="105"/>
    </location>
</feature>
<feature type="helix" evidence="23">
    <location>
        <begin position="112"/>
        <end position="114"/>
    </location>
</feature>
<feature type="strand" evidence="23">
    <location>
        <begin position="124"/>
        <end position="132"/>
    </location>
</feature>
<feature type="helix" evidence="23">
    <location>
        <begin position="134"/>
        <end position="142"/>
    </location>
</feature>
<feature type="turn" evidence="23">
    <location>
        <begin position="143"/>
        <end position="146"/>
    </location>
</feature>
<feature type="helix" evidence="23">
    <location>
        <begin position="148"/>
        <end position="166"/>
    </location>
</feature>
<feature type="strand" evidence="23">
    <location>
        <begin position="172"/>
        <end position="179"/>
    </location>
</feature>
<feature type="turn" evidence="23">
    <location>
        <begin position="180"/>
        <end position="183"/>
    </location>
</feature>
<feature type="strand" evidence="23">
    <location>
        <begin position="184"/>
        <end position="193"/>
    </location>
</feature>
<feature type="strand" evidence="23">
    <location>
        <begin position="195"/>
        <end position="201"/>
    </location>
</feature>
<feature type="helix" evidence="23">
    <location>
        <begin position="204"/>
        <end position="207"/>
    </location>
</feature>
<feature type="turn" evidence="23">
    <location>
        <begin position="208"/>
        <end position="210"/>
    </location>
</feature>
<feature type="helix" evidence="23">
    <location>
        <begin position="211"/>
        <end position="214"/>
    </location>
</feature>
<feature type="strand" evidence="23">
    <location>
        <begin position="226"/>
        <end position="232"/>
    </location>
</feature>
<feature type="strand" evidence="23">
    <location>
        <begin position="266"/>
        <end position="271"/>
    </location>
</feature>
<feature type="helix" evidence="23">
    <location>
        <begin position="282"/>
        <end position="290"/>
    </location>
</feature>
<feature type="helix" evidence="23">
    <location>
        <begin position="292"/>
        <end position="313"/>
    </location>
</feature>
<feature type="helix" evidence="23">
    <location>
        <begin position="315"/>
        <end position="320"/>
    </location>
</feature>
<feature type="helix" evidence="23">
    <location>
        <begin position="322"/>
        <end position="345"/>
    </location>
</feature>
<feature type="helix" evidence="23">
    <location>
        <begin position="347"/>
        <end position="363"/>
    </location>
</feature>
<feature type="helix" evidence="23">
    <location>
        <begin position="364"/>
        <end position="369"/>
    </location>
</feature>
<feature type="helix" evidence="23">
    <location>
        <begin position="370"/>
        <end position="387"/>
    </location>
</feature>
<feature type="helix" evidence="23">
    <location>
        <begin position="390"/>
        <end position="399"/>
    </location>
</feature>
<feature type="helix" evidence="23">
    <location>
        <begin position="403"/>
        <end position="417"/>
    </location>
</feature>
<feature type="helix" evidence="23">
    <location>
        <begin position="422"/>
        <end position="424"/>
    </location>
</feature>
<feature type="helix" evidence="23">
    <location>
        <begin position="431"/>
        <end position="433"/>
    </location>
</feature>
<feature type="helix" evidence="23">
    <location>
        <begin position="434"/>
        <end position="443"/>
    </location>
</feature>
<feature type="helix" evidence="23">
    <location>
        <begin position="444"/>
        <end position="446"/>
    </location>
</feature>
<feature type="helix" evidence="23">
    <location>
        <begin position="450"/>
        <end position="465"/>
    </location>
</feature>
<feature type="helix" evidence="23">
    <location>
        <begin position="469"/>
        <end position="471"/>
    </location>
</feature>
<feature type="helix" evidence="23">
    <location>
        <begin position="474"/>
        <end position="480"/>
    </location>
</feature>
<feature type="strand" evidence="24">
    <location>
        <begin position="482"/>
        <end position="484"/>
    </location>
</feature>
<feature type="helix" evidence="23">
    <location>
        <begin position="485"/>
        <end position="496"/>
    </location>
</feature>
<feature type="helix" evidence="23">
    <location>
        <begin position="503"/>
        <end position="511"/>
    </location>
</feature>
<feature type="helix" evidence="23">
    <location>
        <begin position="514"/>
        <end position="518"/>
    </location>
</feature>
<feature type="helix" evidence="23">
    <location>
        <begin position="523"/>
        <end position="566"/>
    </location>
</feature>
<feature type="strand" evidence="23">
    <location>
        <begin position="580"/>
        <end position="586"/>
    </location>
</feature>
<feature type="strand" evidence="23">
    <location>
        <begin position="595"/>
        <end position="597"/>
    </location>
</feature>
<feature type="strand" evidence="23">
    <location>
        <begin position="599"/>
        <end position="602"/>
    </location>
</feature>
<feature type="helix" evidence="23">
    <location>
        <begin position="603"/>
        <end position="608"/>
    </location>
</feature>
<feature type="helix" evidence="23">
    <location>
        <begin position="620"/>
        <end position="627"/>
    </location>
</feature>
<feature type="turn" evidence="23">
    <location>
        <begin position="637"/>
        <end position="639"/>
    </location>
</feature>
<feature type="strand" evidence="23">
    <location>
        <begin position="643"/>
        <end position="648"/>
    </location>
</feature>
<feature type="strand" evidence="23">
    <location>
        <begin position="660"/>
        <end position="662"/>
    </location>
</feature>
<feature type="strand" evidence="23">
    <location>
        <begin position="668"/>
        <end position="675"/>
    </location>
</feature>
<feature type="helix" evidence="23">
    <location>
        <begin position="677"/>
        <end position="683"/>
    </location>
</feature>
<feature type="helix" evidence="23">
    <location>
        <begin position="688"/>
        <end position="690"/>
    </location>
</feature>
<feature type="strand" evidence="23">
    <location>
        <begin position="693"/>
        <end position="697"/>
    </location>
</feature>
<feature type="helix" evidence="23">
    <location>
        <begin position="698"/>
        <end position="707"/>
    </location>
</feature>
<feature type="helix" evidence="23">
    <location>
        <begin position="712"/>
        <end position="717"/>
    </location>
</feature>
<proteinExistence type="evidence at protein level"/>
<dbReference type="EC" id="3.4.14.-" evidence="2 3 4 6"/>
<dbReference type="EMBL" id="AB889525">
    <property type="protein sequence ID" value="BAO18427.1"/>
    <property type="molecule type" value="Genomic_DNA"/>
</dbReference>
<dbReference type="PDB" id="3WOI">
    <property type="method" value="X-ray"/>
    <property type="resolution" value="2.10 A"/>
    <property type="chains" value="A/B=25-722"/>
</dbReference>
<dbReference type="PDB" id="3WOJ">
    <property type="method" value="X-ray"/>
    <property type="resolution" value="2.20 A"/>
    <property type="chains" value="A/B=25-722"/>
</dbReference>
<dbReference type="PDB" id="3WOK">
    <property type="method" value="X-ray"/>
    <property type="resolution" value="1.95 A"/>
    <property type="chains" value="A/B=25-722"/>
</dbReference>
<dbReference type="PDB" id="3WOL">
    <property type="method" value="X-ray"/>
    <property type="resolution" value="1.74 A"/>
    <property type="chains" value="A/B=25-722"/>
</dbReference>
<dbReference type="PDB" id="3WOM">
    <property type="method" value="X-ray"/>
    <property type="resolution" value="1.86 A"/>
    <property type="chains" value="A/B=25-722"/>
</dbReference>
<dbReference type="PDB" id="3WON">
    <property type="method" value="X-ray"/>
    <property type="resolution" value="1.75 A"/>
    <property type="chains" value="A/B=25-722"/>
</dbReference>
<dbReference type="PDB" id="3WOO">
    <property type="method" value="X-ray"/>
    <property type="resolution" value="1.80 A"/>
    <property type="chains" value="A/B=25-722"/>
</dbReference>
<dbReference type="PDB" id="3WOP">
    <property type="method" value="X-ray"/>
    <property type="resolution" value="1.95 A"/>
    <property type="chains" value="A/B=25-722"/>
</dbReference>
<dbReference type="PDB" id="3WOQ">
    <property type="method" value="X-ray"/>
    <property type="resolution" value="1.82 A"/>
    <property type="chains" value="A/B=25-722"/>
</dbReference>
<dbReference type="PDB" id="3WOR">
    <property type="method" value="X-ray"/>
    <property type="resolution" value="2.10 A"/>
    <property type="chains" value="A/B=25-722"/>
</dbReference>
<dbReference type="PDB" id="4Y06">
    <property type="method" value="X-ray"/>
    <property type="resolution" value="2.18 A"/>
    <property type="chains" value="A/B=1-722"/>
</dbReference>
<dbReference type="PDBsum" id="3WOI"/>
<dbReference type="PDBsum" id="3WOJ"/>
<dbReference type="PDBsum" id="3WOK"/>
<dbReference type="PDBsum" id="3WOL"/>
<dbReference type="PDBsum" id="3WOM"/>
<dbReference type="PDBsum" id="3WON"/>
<dbReference type="PDBsum" id="3WOO"/>
<dbReference type="PDBsum" id="3WOP"/>
<dbReference type="PDBsum" id="3WOQ"/>
<dbReference type="PDBsum" id="3WOR"/>
<dbReference type="PDBsum" id="4Y06"/>
<dbReference type="SMR" id="V5YM14"/>
<dbReference type="MEROPS" id="S46.003"/>
<dbReference type="BRENDA" id="3.4.11.6">
    <property type="organism ID" value="14090"/>
</dbReference>
<dbReference type="EvolutionaryTrace" id="V5YM14"/>
<dbReference type="GO" id="GO:0008239">
    <property type="term" value="F:dipeptidyl-peptidase activity"/>
    <property type="evidence" value="ECO:0000314"/>
    <property type="project" value="UniProtKB"/>
</dbReference>
<dbReference type="GO" id="GO:0042802">
    <property type="term" value="F:identical protein binding"/>
    <property type="evidence" value="ECO:0000314"/>
    <property type="project" value="UniProtKB"/>
</dbReference>
<dbReference type="GO" id="GO:0042803">
    <property type="term" value="F:protein homodimerization activity"/>
    <property type="evidence" value="ECO:0000314"/>
    <property type="project" value="UniProtKB"/>
</dbReference>
<dbReference type="GO" id="GO:0070009">
    <property type="term" value="F:serine-type aminopeptidase activity"/>
    <property type="evidence" value="ECO:0000314"/>
    <property type="project" value="UniProtKB"/>
</dbReference>
<dbReference type="GO" id="GO:0051603">
    <property type="term" value="P:proteolysis involved in protein catabolic process"/>
    <property type="evidence" value="ECO:0000314"/>
    <property type="project" value="UniProtKB"/>
</dbReference>
<dbReference type="FunFam" id="2.40.10.10:FF:000102">
    <property type="entry name" value="Dipeptidyl-peptidase 7"/>
    <property type="match status" value="1"/>
</dbReference>
<dbReference type="Gene3D" id="2.40.10.10">
    <property type="entry name" value="Trypsin-like serine proteases"/>
    <property type="match status" value="1"/>
</dbReference>
<dbReference type="InterPro" id="IPR019500">
    <property type="entry name" value="Pep_S46"/>
</dbReference>
<dbReference type="InterPro" id="IPR009003">
    <property type="entry name" value="Peptidase_S1_PA"/>
</dbReference>
<dbReference type="InterPro" id="IPR043504">
    <property type="entry name" value="Peptidase_S1_PA_chymotrypsin"/>
</dbReference>
<dbReference type="PANTHER" id="PTHR38469">
    <property type="entry name" value="PERIPLASMIC PEPTIDASE SUBFAMILY S1B"/>
    <property type="match status" value="1"/>
</dbReference>
<dbReference type="PANTHER" id="PTHR38469:SF1">
    <property type="entry name" value="PERIPLASMIC PEPTIDASE SUBFAMILY S1B"/>
    <property type="match status" value="1"/>
</dbReference>
<dbReference type="Pfam" id="PF10459">
    <property type="entry name" value="Peptidase_S46"/>
    <property type="match status" value="1"/>
</dbReference>
<dbReference type="SUPFAM" id="SSF50494">
    <property type="entry name" value="Trypsin-like serine proteases"/>
    <property type="match status" value="1"/>
</dbReference>
<comment type="function">
    <text evidence="2 4 6">Exopeptidase that catalyzes the removal of dipeptide units (NH2-P2-P1-) from the free amino termini of oligopeptides and small proteins (PubMed:24598890, PubMed:24827749, PubMed:8892831). Peptide digestion is sequential and substrate recognition is non-specific, with the exception that Pro is not suitable as a P1 residue (PubMed:24827749). Removes many residues of bioactive oligopeptides such as angiotensin I and neuromedin N and also cleaves oxidized insulin B chain. Able to hydrolyze an X-Pro bond, an imido bond. No endopeptidase activity (PubMed:8892831). May play a physiological role in feeding (PubMed:24598890).</text>
</comment>
<comment type="activity regulation">
    <text evidence="6">Completely inhibited by the serine protease inhibitor diisopropyl fluorophosphate (DFP) and potently inhibited by 0.5 mM ZnCl(2), 10 mM o-phenanthlorine, phenylmethanesulfonyl fluoride (PMSF) and N-tosyl-L-phenyl-alanyl chloromethyl ketone (TPCK), but not by N-tosyl-L-lysyl chloromethyl ketone (TLCK). Activity is not affected significantly by protease inhibitors, such as chymostatin, leupeptin, N-ethylmaleimide (NEM), iodoacetate (IAA), L-trans-epoxysuccinyl-leucylamido(4-guanido)butane (E64) and pepstatin A or by CoCl(2), CaCl(2) and EDTA.</text>
</comment>
<comment type="biophysicochemical properties">
    <kinetics>
        <KM evidence="6">1.7 mM for Gly-Phe-pNA (at pH 8 and 37 degrees Celsius)</KM>
        <KM evidence="6">0.87 mM for Ala-Ala-pNA (at pH 8 and 37 degrees Celsius)</KM>
        <KM evidence="6">7.2 mM for Gly-Phe-beta-naphthylamine (at pH 8 and 37 degrees Celsius)</KM>
        <Vmax evidence="2 3">3.4 umol/min/mg enzyme with Gly-Phe-pNA as substrate</Vmax>
        <Vmax evidence="2 3">10.0 umol/min/mg enzyme with Ala-Ala-pNA as substrate</Vmax>
        <Vmax evidence="6">9.4 umol/min/mg enzyme with Gly-Phe-pNA as substrate (at pH 8 and 37 degrees Celsius)</Vmax>
        <Vmax evidence="6">20.0 umol/min/mg enzyme with Ala-Ala-pNA as substrate (at pH 8 and 37 degrees Celsius)</Vmax>
        <Vmax evidence="6">10.0 umol/min/mg enzyme with Gly-Phe-beta-naphthylamine as substrate (at pH 8 and 37 degrees Celsius)</Vmax>
    </kinetics>
    <phDependence>
        <text evidence="6">Optimum pH is 8 for the hydrolysis of Gly-Phe-pNA.</text>
    </phDependence>
    <temperatureDependence>
        <text evidence="6">Optimum temperature is approximately 30 degrees Celsius for the hydrolysis of Gly-Phe-pNA. Stable at a temperature below 20 degrees Celsius for 30 minutes.</text>
    </temperatureDependence>
</comment>
<comment type="subunit">
    <text evidence="4 6">Homodimer.</text>
</comment>
<comment type="domain">
    <text evidence="4">The chymotrypsin fold (25-276 and 574-722) is the catalytic domain and the alpha-helical domain (277-573) is the regulatory domain necessary for exopeptidase activity.</text>
</comment>
<comment type="biotechnology">
    <text evidence="8 9">Designing engineered forms of this protein with the ability to produce custom dipeptides potentially may have a number of commercial and industrial uses including food industry (PubMed:24827749, PubMed:8892831). Maybe useful for drug design (PubMed:24827749).</text>
</comment>
<comment type="similarity">
    <text evidence="10 11">Belongs to the peptidase S46 family.</text>
</comment>
<organism>
    <name type="scientific">Pseudoxanthomonas mexicana</name>
    <dbReference type="NCBI Taxonomy" id="128785"/>
    <lineage>
        <taxon>Bacteria</taxon>
        <taxon>Pseudomonadati</taxon>
        <taxon>Pseudomonadota</taxon>
        <taxon>Gammaproteobacteria</taxon>
        <taxon>Lysobacterales</taxon>
        <taxon>Lysobacteraceae</taxon>
        <taxon>Pseudoxanthomonas</taxon>
    </lineage>
</organism>